<reference key="1">
    <citation type="submission" date="2007-08" db="EMBL/GenBank/DDBJ databases">
        <title>Complete sequence of Shewanella sediminis HAW-EB3.</title>
        <authorList>
            <consortium name="US DOE Joint Genome Institute"/>
            <person name="Copeland A."/>
            <person name="Lucas S."/>
            <person name="Lapidus A."/>
            <person name="Barry K."/>
            <person name="Glavina del Rio T."/>
            <person name="Dalin E."/>
            <person name="Tice H."/>
            <person name="Pitluck S."/>
            <person name="Chertkov O."/>
            <person name="Brettin T."/>
            <person name="Bruce D."/>
            <person name="Detter J.C."/>
            <person name="Han C."/>
            <person name="Schmutz J."/>
            <person name="Larimer F."/>
            <person name="Land M."/>
            <person name="Hauser L."/>
            <person name="Kyrpides N."/>
            <person name="Kim E."/>
            <person name="Zhao J.-S."/>
            <person name="Richardson P."/>
        </authorList>
    </citation>
    <scope>NUCLEOTIDE SEQUENCE [LARGE SCALE GENOMIC DNA]</scope>
    <source>
        <strain>HAW-EB3</strain>
    </source>
</reference>
<protein>
    <recommendedName>
        <fullName evidence="1">Ribosomal RNA large subunit methyltransferase H</fullName>
        <ecNumber evidence="1">2.1.1.177</ecNumber>
    </recommendedName>
    <alternativeName>
        <fullName evidence="1">23S rRNA (pseudouridine1915-N3)-methyltransferase</fullName>
    </alternativeName>
    <alternativeName>
        <fullName evidence="1">23S rRNA m3Psi1915 methyltransferase</fullName>
    </alternativeName>
    <alternativeName>
        <fullName evidence="1">rRNA (pseudouridine-N3-)-methyltransferase RlmH</fullName>
    </alternativeName>
</protein>
<accession>A8FZ15</accession>
<dbReference type="EC" id="2.1.1.177" evidence="1"/>
<dbReference type="EMBL" id="CP000821">
    <property type="protein sequence ID" value="ABV38088.1"/>
    <property type="molecule type" value="Genomic_DNA"/>
</dbReference>
<dbReference type="RefSeq" id="WP_012143818.1">
    <property type="nucleotide sequence ID" value="NC_009831.1"/>
</dbReference>
<dbReference type="SMR" id="A8FZ15"/>
<dbReference type="STRING" id="425104.Ssed_3484"/>
<dbReference type="KEGG" id="sse:Ssed_3484"/>
<dbReference type="eggNOG" id="COG1576">
    <property type="taxonomic scope" value="Bacteria"/>
</dbReference>
<dbReference type="HOGENOM" id="CLU_100552_1_0_6"/>
<dbReference type="OrthoDB" id="9806643at2"/>
<dbReference type="Proteomes" id="UP000002015">
    <property type="component" value="Chromosome"/>
</dbReference>
<dbReference type="GO" id="GO:0005737">
    <property type="term" value="C:cytoplasm"/>
    <property type="evidence" value="ECO:0007669"/>
    <property type="project" value="UniProtKB-SubCell"/>
</dbReference>
<dbReference type="GO" id="GO:0070038">
    <property type="term" value="F:rRNA (pseudouridine-N3-)-methyltransferase activity"/>
    <property type="evidence" value="ECO:0007669"/>
    <property type="project" value="UniProtKB-UniRule"/>
</dbReference>
<dbReference type="CDD" id="cd18081">
    <property type="entry name" value="RlmH-like"/>
    <property type="match status" value="1"/>
</dbReference>
<dbReference type="Gene3D" id="3.40.1280.10">
    <property type="match status" value="1"/>
</dbReference>
<dbReference type="HAMAP" id="MF_00658">
    <property type="entry name" value="23SrRNA_methyltr_H"/>
    <property type="match status" value="1"/>
</dbReference>
<dbReference type="InterPro" id="IPR029028">
    <property type="entry name" value="Alpha/beta_knot_MTases"/>
</dbReference>
<dbReference type="InterPro" id="IPR003742">
    <property type="entry name" value="RlmH-like"/>
</dbReference>
<dbReference type="InterPro" id="IPR029026">
    <property type="entry name" value="tRNA_m1G_MTases_N"/>
</dbReference>
<dbReference type="NCBIfam" id="NF000984">
    <property type="entry name" value="PRK00103.1-1"/>
    <property type="match status" value="1"/>
</dbReference>
<dbReference type="NCBIfam" id="NF000986">
    <property type="entry name" value="PRK00103.1-4"/>
    <property type="match status" value="1"/>
</dbReference>
<dbReference type="NCBIfam" id="TIGR00246">
    <property type="entry name" value="tRNA_RlmH_YbeA"/>
    <property type="match status" value="1"/>
</dbReference>
<dbReference type="PANTHER" id="PTHR33603">
    <property type="entry name" value="METHYLTRANSFERASE"/>
    <property type="match status" value="1"/>
</dbReference>
<dbReference type="PANTHER" id="PTHR33603:SF1">
    <property type="entry name" value="RIBOSOMAL RNA LARGE SUBUNIT METHYLTRANSFERASE H"/>
    <property type="match status" value="1"/>
</dbReference>
<dbReference type="Pfam" id="PF02590">
    <property type="entry name" value="SPOUT_MTase"/>
    <property type="match status" value="1"/>
</dbReference>
<dbReference type="PIRSF" id="PIRSF004505">
    <property type="entry name" value="MT_bac"/>
    <property type="match status" value="1"/>
</dbReference>
<dbReference type="SUPFAM" id="SSF75217">
    <property type="entry name" value="alpha/beta knot"/>
    <property type="match status" value="1"/>
</dbReference>
<organism>
    <name type="scientific">Shewanella sediminis (strain HAW-EB3)</name>
    <dbReference type="NCBI Taxonomy" id="425104"/>
    <lineage>
        <taxon>Bacteria</taxon>
        <taxon>Pseudomonadati</taxon>
        <taxon>Pseudomonadota</taxon>
        <taxon>Gammaproteobacteria</taxon>
        <taxon>Alteromonadales</taxon>
        <taxon>Shewanellaceae</taxon>
        <taxon>Shewanella</taxon>
    </lineage>
</organism>
<sequence length="156" mass="17372">MKLQLIAVGTRMPDWVTTGFQEYQRRFPRDMALELVEIPAGKRGKNADIARILHKEGEQMLAAIPKSNHIVSLDLPGKTWTTPDLATQLGKWQLDGRDVSLLIGGPEGLAPACKQAASQSWCLSALTLPHPLVRVVVAESLYRAWSVNNNHPYHRE</sequence>
<name>RLMH_SHESH</name>
<gene>
    <name evidence="1" type="primary">rlmH</name>
    <name type="ordered locus">Ssed_3484</name>
</gene>
<keyword id="KW-0963">Cytoplasm</keyword>
<keyword id="KW-0489">Methyltransferase</keyword>
<keyword id="KW-1185">Reference proteome</keyword>
<keyword id="KW-0698">rRNA processing</keyword>
<keyword id="KW-0949">S-adenosyl-L-methionine</keyword>
<keyword id="KW-0808">Transferase</keyword>
<evidence type="ECO:0000255" key="1">
    <source>
        <dbReference type="HAMAP-Rule" id="MF_00658"/>
    </source>
</evidence>
<proteinExistence type="inferred from homology"/>
<comment type="function">
    <text evidence="1">Specifically methylates the pseudouridine at position 1915 (m3Psi1915) in 23S rRNA.</text>
</comment>
<comment type="catalytic activity">
    <reaction evidence="1">
        <text>pseudouridine(1915) in 23S rRNA + S-adenosyl-L-methionine = N(3)-methylpseudouridine(1915) in 23S rRNA + S-adenosyl-L-homocysteine + H(+)</text>
        <dbReference type="Rhea" id="RHEA:42752"/>
        <dbReference type="Rhea" id="RHEA-COMP:10221"/>
        <dbReference type="Rhea" id="RHEA-COMP:10222"/>
        <dbReference type="ChEBI" id="CHEBI:15378"/>
        <dbReference type="ChEBI" id="CHEBI:57856"/>
        <dbReference type="ChEBI" id="CHEBI:59789"/>
        <dbReference type="ChEBI" id="CHEBI:65314"/>
        <dbReference type="ChEBI" id="CHEBI:74486"/>
        <dbReference type="EC" id="2.1.1.177"/>
    </reaction>
</comment>
<comment type="subunit">
    <text evidence="1">Homodimer.</text>
</comment>
<comment type="subcellular location">
    <subcellularLocation>
        <location evidence="1">Cytoplasm</location>
    </subcellularLocation>
</comment>
<comment type="similarity">
    <text evidence="1">Belongs to the RNA methyltransferase RlmH family.</text>
</comment>
<feature type="chain" id="PRO_1000082816" description="Ribosomal RNA large subunit methyltransferase H">
    <location>
        <begin position="1"/>
        <end position="156"/>
    </location>
</feature>
<feature type="binding site" evidence="1">
    <location>
        <position position="73"/>
    </location>
    <ligand>
        <name>S-adenosyl-L-methionine</name>
        <dbReference type="ChEBI" id="CHEBI:59789"/>
    </ligand>
</feature>
<feature type="binding site" evidence="1">
    <location>
        <position position="104"/>
    </location>
    <ligand>
        <name>S-adenosyl-L-methionine</name>
        <dbReference type="ChEBI" id="CHEBI:59789"/>
    </ligand>
</feature>
<feature type="binding site" evidence="1">
    <location>
        <begin position="123"/>
        <end position="128"/>
    </location>
    <ligand>
        <name>S-adenosyl-L-methionine</name>
        <dbReference type="ChEBI" id="CHEBI:59789"/>
    </ligand>
</feature>